<evidence type="ECO:0000255" key="1">
    <source>
        <dbReference type="PROSITE-ProRule" id="PRU00161"/>
    </source>
</evidence>
<evidence type="ECO:0000269" key="2">
    <source>
    </source>
</evidence>
<evidence type="ECO:0000269" key="3">
    <source>
    </source>
</evidence>
<evidence type="ECO:0000269" key="4">
    <source>
    </source>
</evidence>
<evidence type="ECO:0000269" key="5">
    <source>
    </source>
</evidence>
<evidence type="ECO:0000269" key="6">
    <source>
    </source>
</evidence>
<evidence type="ECO:0000269" key="7">
    <source>
    </source>
</evidence>
<evidence type="ECO:0000269" key="8">
    <source>
    </source>
</evidence>
<evidence type="ECO:0000269" key="9">
    <source>
    </source>
</evidence>
<evidence type="ECO:0000269" key="10">
    <source>
    </source>
</evidence>
<evidence type="ECO:0000269" key="11">
    <source>
    </source>
</evidence>
<evidence type="ECO:0000269" key="12">
    <source>
    </source>
</evidence>
<evidence type="ECO:0000303" key="13">
    <source>
    </source>
</evidence>
<evidence type="ECO:0000303" key="14">
    <source>
    </source>
</evidence>
<evidence type="ECO:0000305" key="15"/>
<evidence type="ECO:0007829" key="16">
    <source>
        <dbReference type="PDB" id="3R90"/>
    </source>
</evidence>
<evidence type="ECO:0007829" key="17">
    <source>
        <dbReference type="PDB" id="6MS4"/>
    </source>
</evidence>
<reference key="1">
    <citation type="journal article" date="1998" name="Cancer Res.">
        <title>A novel candidate oncogene, MCT-1, is involved in cell cycle progression.</title>
        <authorList>
            <person name="Prosniak M."/>
            <person name="Dierov J."/>
            <person name="Okami K."/>
            <person name="Tilton B."/>
            <person name="Jameson B."/>
            <person name="Sawaya B.E."/>
            <person name="Gartenhaus R.B."/>
        </authorList>
    </citation>
    <scope>NUCLEOTIDE SEQUENCE [MRNA] (ISOFORM 1)</scope>
    <scope>FUNCTION</scope>
    <scope>TISSUE SPECIFICITY</scope>
</reference>
<reference key="2">
    <citation type="journal article" date="2006" name="BMC Genomics">
        <title>NovelFam3000 -- uncharacterized human protein domains conserved across model organisms.</title>
        <authorList>
            <person name="Kemmer D."/>
            <person name="Podowski R.M."/>
            <person name="Arenillas D."/>
            <person name="Lim J."/>
            <person name="Hodges E."/>
            <person name="Roth P."/>
            <person name="Sonnhammer E.L.L."/>
            <person name="Hoeoeg C."/>
            <person name="Wasserman W.W."/>
        </authorList>
    </citation>
    <scope>NUCLEOTIDE SEQUENCE [MRNA] (ISOFORM 1)</scope>
</reference>
<reference key="3">
    <citation type="journal article" date="2004" name="Nat. Genet.">
        <title>Complete sequencing and characterization of 21,243 full-length human cDNAs.</title>
        <authorList>
            <person name="Ota T."/>
            <person name="Suzuki Y."/>
            <person name="Nishikawa T."/>
            <person name="Otsuki T."/>
            <person name="Sugiyama T."/>
            <person name="Irie R."/>
            <person name="Wakamatsu A."/>
            <person name="Hayashi K."/>
            <person name="Sato H."/>
            <person name="Nagai K."/>
            <person name="Kimura K."/>
            <person name="Makita H."/>
            <person name="Sekine M."/>
            <person name="Obayashi M."/>
            <person name="Nishi T."/>
            <person name="Shibahara T."/>
            <person name="Tanaka T."/>
            <person name="Ishii S."/>
            <person name="Yamamoto J."/>
            <person name="Saito K."/>
            <person name="Kawai Y."/>
            <person name="Isono Y."/>
            <person name="Nakamura Y."/>
            <person name="Nagahari K."/>
            <person name="Murakami K."/>
            <person name="Yasuda T."/>
            <person name="Iwayanagi T."/>
            <person name="Wagatsuma M."/>
            <person name="Shiratori A."/>
            <person name="Sudo H."/>
            <person name="Hosoiri T."/>
            <person name="Kaku Y."/>
            <person name="Kodaira H."/>
            <person name="Kondo H."/>
            <person name="Sugawara M."/>
            <person name="Takahashi M."/>
            <person name="Kanda K."/>
            <person name="Yokoi T."/>
            <person name="Furuya T."/>
            <person name="Kikkawa E."/>
            <person name="Omura Y."/>
            <person name="Abe K."/>
            <person name="Kamihara K."/>
            <person name="Katsuta N."/>
            <person name="Sato K."/>
            <person name="Tanikawa M."/>
            <person name="Yamazaki M."/>
            <person name="Ninomiya K."/>
            <person name="Ishibashi T."/>
            <person name="Yamashita H."/>
            <person name="Murakawa K."/>
            <person name="Fujimori K."/>
            <person name="Tanai H."/>
            <person name="Kimata M."/>
            <person name="Watanabe M."/>
            <person name="Hiraoka S."/>
            <person name="Chiba Y."/>
            <person name="Ishida S."/>
            <person name="Ono Y."/>
            <person name="Takiguchi S."/>
            <person name="Watanabe S."/>
            <person name="Yosida M."/>
            <person name="Hotuta T."/>
            <person name="Kusano J."/>
            <person name="Kanehori K."/>
            <person name="Takahashi-Fujii A."/>
            <person name="Hara H."/>
            <person name="Tanase T.-O."/>
            <person name="Nomura Y."/>
            <person name="Togiya S."/>
            <person name="Komai F."/>
            <person name="Hara R."/>
            <person name="Takeuchi K."/>
            <person name="Arita M."/>
            <person name="Imose N."/>
            <person name="Musashino K."/>
            <person name="Yuuki H."/>
            <person name="Oshima A."/>
            <person name="Sasaki N."/>
            <person name="Aotsuka S."/>
            <person name="Yoshikawa Y."/>
            <person name="Matsunawa H."/>
            <person name="Ichihara T."/>
            <person name="Shiohata N."/>
            <person name="Sano S."/>
            <person name="Moriya S."/>
            <person name="Momiyama H."/>
            <person name="Satoh N."/>
            <person name="Takami S."/>
            <person name="Terashima Y."/>
            <person name="Suzuki O."/>
            <person name="Nakagawa S."/>
            <person name="Senoh A."/>
            <person name="Mizoguchi H."/>
            <person name="Goto Y."/>
            <person name="Shimizu F."/>
            <person name="Wakebe H."/>
            <person name="Hishigaki H."/>
            <person name="Watanabe T."/>
            <person name="Sugiyama A."/>
            <person name="Takemoto M."/>
            <person name="Kawakami B."/>
            <person name="Yamazaki M."/>
            <person name="Watanabe K."/>
            <person name="Kumagai A."/>
            <person name="Itakura S."/>
            <person name="Fukuzumi Y."/>
            <person name="Fujimori Y."/>
            <person name="Komiyama M."/>
            <person name="Tashiro H."/>
            <person name="Tanigami A."/>
            <person name="Fujiwara T."/>
            <person name="Ono T."/>
            <person name="Yamada K."/>
            <person name="Fujii Y."/>
            <person name="Ozaki K."/>
            <person name="Hirao M."/>
            <person name="Ohmori Y."/>
            <person name="Kawabata A."/>
            <person name="Hikiji T."/>
            <person name="Kobatake N."/>
            <person name="Inagaki H."/>
            <person name="Ikema Y."/>
            <person name="Okamoto S."/>
            <person name="Okitani R."/>
            <person name="Kawakami T."/>
            <person name="Noguchi S."/>
            <person name="Itoh T."/>
            <person name="Shigeta K."/>
            <person name="Senba T."/>
            <person name="Matsumura K."/>
            <person name="Nakajima Y."/>
            <person name="Mizuno T."/>
            <person name="Morinaga M."/>
            <person name="Sasaki M."/>
            <person name="Togashi T."/>
            <person name="Oyama M."/>
            <person name="Hata H."/>
            <person name="Watanabe M."/>
            <person name="Komatsu T."/>
            <person name="Mizushima-Sugano J."/>
            <person name="Satoh T."/>
            <person name="Shirai Y."/>
            <person name="Takahashi Y."/>
            <person name="Nakagawa K."/>
            <person name="Okumura K."/>
            <person name="Nagase T."/>
            <person name="Nomura N."/>
            <person name="Kikuchi H."/>
            <person name="Masuho Y."/>
            <person name="Yamashita R."/>
            <person name="Nakai K."/>
            <person name="Yada T."/>
            <person name="Nakamura Y."/>
            <person name="Ohara O."/>
            <person name="Isogai T."/>
            <person name="Sugano S."/>
        </authorList>
    </citation>
    <scope>NUCLEOTIDE SEQUENCE [LARGE SCALE MRNA] (ISOFORMS 1 AND 3)</scope>
    <source>
        <tissue>Brain</tissue>
    </source>
</reference>
<reference key="4">
    <citation type="journal article" date="2005" name="Nature">
        <title>The DNA sequence of the human X chromosome.</title>
        <authorList>
            <person name="Ross M.T."/>
            <person name="Grafham D.V."/>
            <person name="Coffey A.J."/>
            <person name="Scherer S."/>
            <person name="McLay K."/>
            <person name="Muzny D."/>
            <person name="Platzer M."/>
            <person name="Howell G.R."/>
            <person name="Burrows C."/>
            <person name="Bird C.P."/>
            <person name="Frankish A."/>
            <person name="Lovell F.L."/>
            <person name="Howe K.L."/>
            <person name="Ashurst J.L."/>
            <person name="Fulton R.S."/>
            <person name="Sudbrak R."/>
            <person name="Wen G."/>
            <person name="Jones M.C."/>
            <person name="Hurles M.E."/>
            <person name="Andrews T.D."/>
            <person name="Scott C.E."/>
            <person name="Searle S."/>
            <person name="Ramser J."/>
            <person name="Whittaker A."/>
            <person name="Deadman R."/>
            <person name="Carter N.P."/>
            <person name="Hunt S.E."/>
            <person name="Chen R."/>
            <person name="Cree A."/>
            <person name="Gunaratne P."/>
            <person name="Havlak P."/>
            <person name="Hodgson A."/>
            <person name="Metzker M.L."/>
            <person name="Richards S."/>
            <person name="Scott G."/>
            <person name="Steffen D."/>
            <person name="Sodergren E."/>
            <person name="Wheeler D.A."/>
            <person name="Worley K.C."/>
            <person name="Ainscough R."/>
            <person name="Ambrose K.D."/>
            <person name="Ansari-Lari M.A."/>
            <person name="Aradhya S."/>
            <person name="Ashwell R.I."/>
            <person name="Babbage A.K."/>
            <person name="Bagguley C.L."/>
            <person name="Ballabio A."/>
            <person name="Banerjee R."/>
            <person name="Barker G.E."/>
            <person name="Barlow K.F."/>
            <person name="Barrett I.P."/>
            <person name="Bates K.N."/>
            <person name="Beare D.M."/>
            <person name="Beasley H."/>
            <person name="Beasley O."/>
            <person name="Beck A."/>
            <person name="Bethel G."/>
            <person name="Blechschmidt K."/>
            <person name="Brady N."/>
            <person name="Bray-Allen S."/>
            <person name="Bridgeman A.M."/>
            <person name="Brown A.J."/>
            <person name="Brown M.J."/>
            <person name="Bonnin D."/>
            <person name="Bruford E.A."/>
            <person name="Buhay C."/>
            <person name="Burch P."/>
            <person name="Burford D."/>
            <person name="Burgess J."/>
            <person name="Burrill W."/>
            <person name="Burton J."/>
            <person name="Bye J.M."/>
            <person name="Carder C."/>
            <person name="Carrel L."/>
            <person name="Chako J."/>
            <person name="Chapman J.C."/>
            <person name="Chavez D."/>
            <person name="Chen E."/>
            <person name="Chen G."/>
            <person name="Chen Y."/>
            <person name="Chen Z."/>
            <person name="Chinault C."/>
            <person name="Ciccodicola A."/>
            <person name="Clark S.Y."/>
            <person name="Clarke G."/>
            <person name="Clee C.M."/>
            <person name="Clegg S."/>
            <person name="Clerc-Blankenburg K."/>
            <person name="Clifford K."/>
            <person name="Cobley V."/>
            <person name="Cole C.G."/>
            <person name="Conquer J.S."/>
            <person name="Corby N."/>
            <person name="Connor R.E."/>
            <person name="David R."/>
            <person name="Davies J."/>
            <person name="Davis C."/>
            <person name="Davis J."/>
            <person name="Delgado O."/>
            <person name="Deshazo D."/>
            <person name="Dhami P."/>
            <person name="Ding Y."/>
            <person name="Dinh H."/>
            <person name="Dodsworth S."/>
            <person name="Draper H."/>
            <person name="Dugan-Rocha S."/>
            <person name="Dunham A."/>
            <person name="Dunn M."/>
            <person name="Durbin K.J."/>
            <person name="Dutta I."/>
            <person name="Eades T."/>
            <person name="Ellwood M."/>
            <person name="Emery-Cohen A."/>
            <person name="Errington H."/>
            <person name="Evans K.L."/>
            <person name="Faulkner L."/>
            <person name="Francis F."/>
            <person name="Frankland J."/>
            <person name="Fraser A.E."/>
            <person name="Galgoczy P."/>
            <person name="Gilbert J."/>
            <person name="Gill R."/>
            <person name="Gloeckner G."/>
            <person name="Gregory S.G."/>
            <person name="Gribble S."/>
            <person name="Griffiths C."/>
            <person name="Grocock R."/>
            <person name="Gu Y."/>
            <person name="Gwilliam R."/>
            <person name="Hamilton C."/>
            <person name="Hart E.A."/>
            <person name="Hawes A."/>
            <person name="Heath P.D."/>
            <person name="Heitmann K."/>
            <person name="Hennig S."/>
            <person name="Hernandez J."/>
            <person name="Hinzmann B."/>
            <person name="Ho S."/>
            <person name="Hoffs M."/>
            <person name="Howden P.J."/>
            <person name="Huckle E.J."/>
            <person name="Hume J."/>
            <person name="Hunt P.J."/>
            <person name="Hunt A.R."/>
            <person name="Isherwood J."/>
            <person name="Jacob L."/>
            <person name="Johnson D."/>
            <person name="Jones S."/>
            <person name="de Jong P.J."/>
            <person name="Joseph S.S."/>
            <person name="Keenan S."/>
            <person name="Kelly S."/>
            <person name="Kershaw J.K."/>
            <person name="Khan Z."/>
            <person name="Kioschis P."/>
            <person name="Klages S."/>
            <person name="Knights A.J."/>
            <person name="Kosiura A."/>
            <person name="Kovar-Smith C."/>
            <person name="Laird G.K."/>
            <person name="Langford C."/>
            <person name="Lawlor S."/>
            <person name="Leversha M."/>
            <person name="Lewis L."/>
            <person name="Liu W."/>
            <person name="Lloyd C."/>
            <person name="Lloyd D.M."/>
            <person name="Loulseged H."/>
            <person name="Loveland J.E."/>
            <person name="Lovell J.D."/>
            <person name="Lozado R."/>
            <person name="Lu J."/>
            <person name="Lyne R."/>
            <person name="Ma J."/>
            <person name="Maheshwari M."/>
            <person name="Matthews L.H."/>
            <person name="McDowall J."/>
            <person name="McLaren S."/>
            <person name="McMurray A."/>
            <person name="Meidl P."/>
            <person name="Meitinger T."/>
            <person name="Milne S."/>
            <person name="Miner G."/>
            <person name="Mistry S.L."/>
            <person name="Morgan M."/>
            <person name="Morris S."/>
            <person name="Mueller I."/>
            <person name="Mullikin J.C."/>
            <person name="Nguyen N."/>
            <person name="Nordsiek G."/>
            <person name="Nyakatura G."/>
            <person name="O'dell C.N."/>
            <person name="Okwuonu G."/>
            <person name="Palmer S."/>
            <person name="Pandian R."/>
            <person name="Parker D."/>
            <person name="Parrish J."/>
            <person name="Pasternak S."/>
            <person name="Patel D."/>
            <person name="Pearce A.V."/>
            <person name="Pearson D.M."/>
            <person name="Pelan S.E."/>
            <person name="Perez L."/>
            <person name="Porter K.M."/>
            <person name="Ramsey Y."/>
            <person name="Reichwald K."/>
            <person name="Rhodes S."/>
            <person name="Ridler K.A."/>
            <person name="Schlessinger D."/>
            <person name="Schueler M.G."/>
            <person name="Sehra H.K."/>
            <person name="Shaw-Smith C."/>
            <person name="Shen H."/>
            <person name="Sheridan E.M."/>
            <person name="Shownkeen R."/>
            <person name="Skuce C.D."/>
            <person name="Smith M.L."/>
            <person name="Sotheran E.C."/>
            <person name="Steingruber H.E."/>
            <person name="Steward C.A."/>
            <person name="Storey R."/>
            <person name="Swann R.M."/>
            <person name="Swarbreck D."/>
            <person name="Tabor P.E."/>
            <person name="Taudien S."/>
            <person name="Taylor T."/>
            <person name="Teague B."/>
            <person name="Thomas K."/>
            <person name="Thorpe A."/>
            <person name="Timms K."/>
            <person name="Tracey A."/>
            <person name="Trevanion S."/>
            <person name="Tromans A.C."/>
            <person name="d'Urso M."/>
            <person name="Verduzco D."/>
            <person name="Villasana D."/>
            <person name="Waldron L."/>
            <person name="Wall M."/>
            <person name="Wang Q."/>
            <person name="Warren J."/>
            <person name="Warry G.L."/>
            <person name="Wei X."/>
            <person name="West A."/>
            <person name="Whitehead S.L."/>
            <person name="Whiteley M.N."/>
            <person name="Wilkinson J.E."/>
            <person name="Willey D.L."/>
            <person name="Williams G."/>
            <person name="Williams L."/>
            <person name="Williamson A."/>
            <person name="Williamson H."/>
            <person name="Wilming L."/>
            <person name="Woodmansey R.L."/>
            <person name="Wray P.W."/>
            <person name="Yen J."/>
            <person name="Zhang J."/>
            <person name="Zhou J."/>
            <person name="Zoghbi H."/>
            <person name="Zorilla S."/>
            <person name="Buck D."/>
            <person name="Reinhardt R."/>
            <person name="Poustka A."/>
            <person name="Rosenthal A."/>
            <person name="Lehrach H."/>
            <person name="Meindl A."/>
            <person name="Minx P.J."/>
            <person name="Hillier L.W."/>
            <person name="Willard H.F."/>
            <person name="Wilson R.K."/>
            <person name="Waterston R.H."/>
            <person name="Rice C.M."/>
            <person name="Vaudin M."/>
            <person name="Coulson A."/>
            <person name="Nelson D.L."/>
            <person name="Weinstock G."/>
            <person name="Sulston J.E."/>
            <person name="Durbin R.M."/>
            <person name="Hubbard T."/>
            <person name="Gibbs R.A."/>
            <person name="Beck S."/>
            <person name="Rogers J."/>
            <person name="Bentley D.R."/>
        </authorList>
    </citation>
    <scope>NUCLEOTIDE SEQUENCE [LARGE SCALE GENOMIC DNA]</scope>
</reference>
<reference key="5">
    <citation type="submission" date="2005-09" db="EMBL/GenBank/DDBJ databases">
        <authorList>
            <person name="Mural R.J."/>
            <person name="Istrail S."/>
            <person name="Sutton G.G."/>
            <person name="Florea L."/>
            <person name="Halpern A.L."/>
            <person name="Mobarry C.M."/>
            <person name="Lippert R."/>
            <person name="Walenz B."/>
            <person name="Shatkay H."/>
            <person name="Dew I."/>
            <person name="Miller J.R."/>
            <person name="Flanigan M.J."/>
            <person name="Edwards N.J."/>
            <person name="Bolanos R."/>
            <person name="Fasulo D."/>
            <person name="Halldorsson B.V."/>
            <person name="Hannenhalli S."/>
            <person name="Turner R."/>
            <person name="Yooseph S."/>
            <person name="Lu F."/>
            <person name="Nusskern D.R."/>
            <person name="Shue B.C."/>
            <person name="Zheng X.H."/>
            <person name="Zhong F."/>
            <person name="Delcher A.L."/>
            <person name="Huson D.H."/>
            <person name="Kravitz S.A."/>
            <person name="Mouchard L."/>
            <person name="Reinert K."/>
            <person name="Remington K.A."/>
            <person name="Clark A.G."/>
            <person name="Waterman M.S."/>
            <person name="Eichler E.E."/>
            <person name="Adams M.D."/>
            <person name="Hunkapiller M.W."/>
            <person name="Myers E.W."/>
            <person name="Venter J.C."/>
        </authorList>
    </citation>
    <scope>NUCLEOTIDE SEQUENCE [LARGE SCALE GENOMIC DNA]</scope>
</reference>
<reference key="6">
    <citation type="journal article" date="2004" name="Genome Res.">
        <title>The status, quality, and expansion of the NIH full-length cDNA project: the Mammalian Gene Collection (MGC).</title>
        <authorList>
            <consortium name="The MGC Project Team"/>
        </authorList>
    </citation>
    <scope>NUCLEOTIDE SEQUENCE [LARGE SCALE MRNA] (ISOFORMS 1 AND 2)</scope>
    <source>
        <tissue>Chondrosarcoma</tissue>
        <tissue>Eye</tissue>
    </source>
</reference>
<reference key="7">
    <citation type="journal article" date="1999" name="J. Cell. Biochem.">
        <title>Increased G1 cyclin/cdk activity in cells overexpressing the candidate oncogene, MCT-1.</title>
        <authorList>
            <person name="Dierov J."/>
            <person name="Prosniak M."/>
            <person name="Gallia G."/>
            <person name="Gartenhaus R.B."/>
        </authorList>
    </citation>
    <scope>FUNCTION</scope>
</reference>
<reference key="8">
    <citation type="journal article" date="2001" name="Oncogene">
        <title>Expression and stabilization of the MCT-1 protein by DNA damaging agents.</title>
        <authorList>
            <person name="Herbert G.B."/>
            <person name="Shi B."/>
            <person name="Gartenhaus R.B."/>
        </authorList>
    </citation>
    <scope>FUNCTION</scope>
    <scope>SUBCELLULAR LOCATION</scope>
    <scope>INDUCTION</scope>
</reference>
<reference key="9">
    <citation type="journal article" date="2003" name="Blood">
        <title>Expression of the candidate MCT-1 oncogene in B- and T-cell lymphoid malignancies.</title>
        <authorList>
            <person name="Shi B."/>
            <person name="Hsu H.-L."/>
            <person name="Evens A.M."/>
            <person name="Gordon L.I."/>
            <person name="Gartenhaus R.B."/>
        </authorList>
    </citation>
    <scope>FUNCTION</scope>
</reference>
<reference key="10">
    <citation type="journal article" date="2005" name="Cancer Res.">
        <title>MCT-1 oncogene contributes to increased in vivo tumorigenicity of MCF7 cells by promotion of angiogenesis and inhibition of apoptosis.</title>
        <authorList>
            <person name="Levenson A.S."/>
            <person name="Thurn K.E."/>
            <person name="Simons L.A."/>
            <person name="Veliceasa D."/>
            <person name="Jarrett J."/>
            <person name="Osipo C."/>
            <person name="Jordan V.C."/>
            <person name="Volpert O.V."/>
            <person name="Satcher R.L. Jr."/>
            <person name="Gartenhaus R.B."/>
        </authorList>
    </citation>
    <scope>FUNCTION</scope>
</reference>
<reference key="11">
    <citation type="journal article" date="2005" name="Oncogene">
        <title>The MCT-1 oncogene product impairs cell cycle checkpoint control and transforms human mammary epithelial cells.</title>
        <authorList>
            <person name="Hsu H.-L."/>
            <person name="Shi B."/>
            <person name="Gartenhaus R.B."/>
        </authorList>
    </citation>
    <scope>FUNCTION</scope>
</reference>
<reference key="12">
    <citation type="journal article" date="2006" name="Cancer Res.">
        <title>MCT-1 protein interacts with the cap complex and modulates messenger RNA translational profiles.</title>
        <authorList>
            <person name="Reinert L.S."/>
            <person name="Shi B."/>
            <person name="Nandi S."/>
            <person name="Mazan-Mamczarz K."/>
            <person name="Vitolo M."/>
            <person name="Bachman K.E."/>
            <person name="He H."/>
            <person name="Gartenhaus R.B."/>
        </authorList>
    </citation>
    <scope>FUNCTION</scope>
    <scope>SUBCELLULAR LOCATION</scope>
    <scope>DOMAIN PUA</scope>
    <scope>INTERACTION WITH DENR</scope>
</reference>
<reference key="13">
    <citation type="journal article" date="2007" name="DNA Repair">
        <title>MCT-1 oncogene downregulates p53 and destabilizes genome structure in the response to DNA double-strand damage.</title>
        <authorList>
            <person name="Hsu H.-L."/>
            <person name="Choy C.O."/>
            <person name="Kasiappan R."/>
            <person name="Shih H.-J."/>
            <person name="Sawyer J.R."/>
            <person name="Shu C.-L."/>
            <person name="Chu K.-L."/>
            <person name="Chen Y.-R."/>
            <person name="Hsu H.-F."/>
            <person name="Gartenhaus R.B."/>
        </authorList>
    </citation>
    <scope>FUNCTION</scope>
</reference>
<reference key="14">
    <citation type="journal article" date="2007" name="Oncogene">
        <title>Phosphorylation of MCT-1 by p44/42 MAPK is required for its stabilization in response to DNA damage.</title>
        <authorList>
            <person name="Nandi S."/>
            <person name="Reinert L.S."/>
            <person name="Hachem A."/>
            <person name="Mazan-Mamczarz K."/>
            <person name="Hagner P."/>
            <person name="He H."/>
            <person name="Gartenhaus R.B."/>
        </authorList>
    </citation>
    <scope>FUNCTION</scope>
    <scope>PHOSPHORYLATION AT THR-81 AND SER-118</scope>
    <scope>MUTAGENESIS OF THR-81 AND SER-118</scope>
</reference>
<reference key="15">
    <citation type="journal article" date="2010" name="Genes Dev.">
        <title>Activities of ligatin and MCT-1/DENR in eukaryotic translation initiation and ribosomal recycling.</title>
        <authorList>
            <person name="Skabkin M.A."/>
            <person name="Skabkina O.V."/>
            <person name="Dhote V."/>
            <person name="Komar A.A."/>
            <person name="Hellen C.U."/>
            <person name="Pestova T.V."/>
        </authorList>
    </citation>
    <scope>FUNCTION</scope>
</reference>
<reference key="16">
    <citation type="journal article" date="2011" name="BMC Syst. Biol.">
        <title>Initial characterization of the human central proteome.</title>
        <authorList>
            <person name="Burkard T.R."/>
            <person name="Planyavsky M."/>
            <person name="Kaupe I."/>
            <person name="Breitwieser F.P."/>
            <person name="Buerckstuemmer T."/>
            <person name="Bennett K.L."/>
            <person name="Superti-Furga G."/>
            <person name="Colinge J."/>
        </authorList>
    </citation>
    <scope>IDENTIFICATION BY MASS SPECTROMETRY [LARGE SCALE ANALYSIS]</scope>
</reference>
<reference key="17">
    <citation type="journal article" date="2015" name="Proteomics">
        <title>N-terminome analysis of the human mitochondrial proteome.</title>
        <authorList>
            <person name="Vaca Jacome A.S."/>
            <person name="Rabilloud T."/>
            <person name="Schaeffer-Reiss C."/>
            <person name="Rompais M."/>
            <person name="Ayoub D."/>
            <person name="Lane L."/>
            <person name="Bairoch A."/>
            <person name="Van Dorsselaer A."/>
            <person name="Carapito C."/>
        </authorList>
    </citation>
    <scope>IDENTIFICATION BY MASS SPECTROMETRY [LARGE SCALE ANALYSIS]</scope>
</reference>
<reference key="18">
    <citation type="journal article" date="2023" name="Cell">
        <title>Human MCTS1-dependent translation of JAK2 is essential for IFN-gamma immunity to mycobacteria.</title>
        <authorList>
            <person name="Bohlen J."/>
            <person name="Zhou Q."/>
            <person name="Philippot Q."/>
            <person name="Ogishi M."/>
            <person name="Rinchai D."/>
            <person name="Nieminen T."/>
            <person name="Seyedpour S."/>
            <person name="Parvaneh N."/>
            <person name="Rezaei N."/>
            <person name="Yazdanpanah N."/>
            <person name="Momenilandi M."/>
            <person name="Conil C."/>
            <person name="Neehus A.L."/>
            <person name="Schmidt C."/>
            <person name="Arango-Franco C.A."/>
            <person name="Voyer T.L."/>
            <person name="Khan T."/>
            <person name="Yang R."/>
            <person name="Puchan J."/>
            <person name="Erazo L."/>
            <person name="Roiuk M."/>
            <person name="Vatovec T."/>
            <person name="Janda Z."/>
            <person name="Bagaric I."/>
            <person name="Materna M."/>
            <person name="Gervais A."/>
            <person name="Li H."/>
            <person name="Rosain J."/>
            <person name="Peel J.N."/>
            <person name="Seeleuthner Y."/>
            <person name="Han J.E."/>
            <person name="L'Honneur A.S."/>
            <person name="Moncada-Velez M."/>
            <person name="Martin-Fernandez M."/>
            <person name="Horesh M.E."/>
            <person name="Kochetkov T."/>
            <person name="Schmidt M."/>
            <person name="AlShehri M.A."/>
            <person name="Salo E."/>
            <person name="Saxen H."/>
            <person name="ElGhazali G."/>
            <person name="Yatim A."/>
            <person name="Soudee C."/>
            <person name="Sallusto F."/>
            <person name="Ensser A."/>
            <person name="Marr N."/>
            <person name="Zhang P."/>
            <person name="Bogunovic D."/>
            <person name="Cobat A."/>
            <person name="Shahrooei M."/>
            <person name="Beziat V."/>
            <person name="Abel L."/>
            <person name="Wang X."/>
            <person name="Boisson-Dupuis S."/>
            <person name="Teleman A.A."/>
            <person name="Bustamante J."/>
            <person name="Zhang Q."/>
            <person name="Casanova J.L."/>
        </authorList>
    </citation>
    <scope>FUNCTION</scope>
    <scope>INTERACTION WITH DENR</scope>
    <scope>INVOLVEMENT IN IMD118</scope>
</reference>
<keyword id="KW-0002">3D-structure</keyword>
<keyword id="KW-0025">Alternative splicing</keyword>
<keyword id="KW-0131">Cell cycle</keyword>
<keyword id="KW-0963">Cytoplasm</keyword>
<keyword id="KW-0227">DNA damage</keyword>
<keyword id="KW-0341">Growth regulation</keyword>
<keyword id="KW-0396">Initiation factor</keyword>
<keyword id="KW-0597">Phosphoprotein</keyword>
<keyword id="KW-0648">Protein biosynthesis</keyword>
<keyword id="KW-1267">Proteomics identification</keyword>
<keyword id="KW-1185">Reference proteome</keyword>
<keyword id="KW-0804">Transcription</keyword>
<keyword id="KW-0805">Transcription regulation</keyword>
<keyword id="KW-0043">Tumor suppressor</keyword>
<name>MCTS1_HUMAN</name>
<accession>Q9ULC4</accession>
<accession>B4DGY2</accession>
<accession>Q502X6</accession>
<organism>
    <name type="scientific">Homo sapiens</name>
    <name type="common">Human</name>
    <dbReference type="NCBI Taxonomy" id="9606"/>
    <lineage>
        <taxon>Eukaryota</taxon>
        <taxon>Metazoa</taxon>
        <taxon>Chordata</taxon>
        <taxon>Craniata</taxon>
        <taxon>Vertebrata</taxon>
        <taxon>Euteleostomi</taxon>
        <taxon>Mammalia</taxon>
        <taxon>Eutheria</taxon>
        <taxon>Euarchontoglires</taxon>
        <taxon>Primates</taxon>
        <taxon>Haplorrhini</taxon>
        <taxon>Catarrhini</taxon>
        <taxon>Hominidae</taxon>
        <taxon>Homo</taxon>
    </lineage>
</organism>
<proteinExistence type="evidence at protein level"/>
<gene>
    <name type="primary">MCTS1</name>
    <name type="synonym">MCT1</name>
</gene>
<protein>
    <recommendedName>
        <fullName>Malignant T-cell-amplified sequence 1</fullName>
        <shortName>MCT-1</shortName>
    </recommendedName>
    <alternativeName>
        <fullName>Multiple copies T-cell malignancies</fullName>
    </alternativeName>
</protein>
<sequence>MFKKFDEKENVSNCIQLKTSVIKGIKNQLIEQFPGIEPWLNQIMPKKDPVKIVRCHEHIEILTVNGELLFFRQREGPFYPTLRLLHKYPFILPHQQVDKGAIKFVLSGANIMCPGLTSPGAKLYPAAVDTIVAIMAEGKQHALCVGVMKMSAEDIEKVNKGIGIENIHYLNDGLWHMKTYK</sequence>
<dbReference type="EMBL" id="AB034206">
    <property type="protein sequence ID" value="BAA86055.1"/>
    <property type="molecule type" value="mRNA"/>
</dbReference>
<dbReference type="EMBL" id="AY364258">
    <property type="protein sequence ID" value="AAQ76817.1"/>
    <property type="molecule type" value="mRNA"/>
</dbReference>
<dbReference type="EMBL" id="AK294834">
    <property type="protein sequence ID" value="BAG57943.1"/>
    <property type="molecule type" value="mRNA"/>
</dbReference>
<dbReference type="EMBL" id="AK311993">
    <property type="protein sequence ID" value="BAG34931.1"/>
    <property type="molecule type" value="mRNA"/>
</dbReference>
<dbReference type="EMBL" id="AC011890">
    <property type="status" value="NOT_ANNOTATED_CDS"/>
    <property type="molecule type" value="Genomic_DNA"/>
</dbReference>
<dbReference type="EMBL" id="CH471107">
    <property type="protein sequence ID" value="EAX11874.1"/>
    <property type="molecule type" value="Genomic_DNA"/>
</dbReference>
<dbReference type="EMBL" id="BC001013">
    <property type="protein sequence ID" value="AAH01013.1"/>
    <property type="molecule type" value="mRNA"/>
</dbReference>
<dbReference type="EMBL" id="BC095461">
    <property type="protein sequence ID" value="AAH95461.1"/>
    <property type="molecule type" value="mRNA"/>
</dbReference>
<dbReference type="CCDS" id="CCDS14601.1">
    <molecule id="Q9ULC4-1"/>
</dbReference>
<dbReference type="CCDS" id="CCDS48160.1">
    <molecule id="Q9ULC4-3"/>
</dbReference>
<dbReference type="RefSeq" id="NP_001131026.1">
    <molecule id="Q9ULC4-3"/>
    <property type="nucleotide sequence ID" value="NM_001137554.2"/>
</dbReference>
<dbReference type="RefSeq" id="NP_054779.1">
    <molecule id="Q9ULC4-1"/>
    <property type="nucleotide sequence ID" value="NM_014060.3"/>
</dbReference>
<dbReference type="PDB" id="3R90">
    <property type="method" value="X-ray"/>
    <property type="resolution" value="1.70 A"/>
    <property type="chains" value="A/B/C/D/E/F/G/H/I/J/K/L=1-181"/>
</dbReference>
<dbReference type="PDB" id="5ONS">
    <property type="method" value="X-ray"/>
    <property type="resolution" value="2.14 A"/>
    <property type="chains" value="A=1-181"/>
</dbReference>
<dbReference type="PDB" id="5VYC">
    <property type="method" value="X-ray"/>
    <property type="resolution" value="6.00 A"/>
    <property type="chains" value="k1/k2/k3/k4/k5/k6=1-181"/>
</dbReference>
<dbReference type="PDB" id="6MS4">
    <property type="method" value="X-ray"/>
    <property type="resolution" value="2.00 A"/>
    <property type="chains" value="A=1-181"/>
</dbReference>
<dbReference type="PDBsum" id="3R90"/>
<dbReference type="PDBsum" id="5ONS"/>
<dbReference type="PDBsum" id="5VYC"/>
<dbReference type="PDBsum" id="6MS4"/>
<dbReference type="SMR" id="Q9ULC4"/>
<dbReference type="BioGRID" id="118806">
    <property type="interactions" value="140"/>
</dbReference>
<dbReference type="FunCoup" id="Q9ULC4">
    <property type="interactions" value="1511"/>
</dbReference>
<dbReference type="IntAct" id="Q9ULC4">
    <property type="interactions" value="54"/>
</dbReference>
<dbReference type="MINT" id="Q9ULC4"/>
<dbReference type="STRING" id="9606.ENSP00000360365"/>
<dbReference type="BindingDB" id="Q9ULC4"/>
<dbReference type="GlyGen" id="Q9ULC4">
    <property type="glycosylation" value="1 site, 1 O-linked glycan (1 site)"/>
</dbReference>
<dbReference type="iPTMnet" id="Q9ULC4"/>
<dbReference type="MetOSite" id="Q9ULC4"/>
<dbReference type="PhosphoSitePlus" id="Q9ULC4"/>
<dbReference type="SwissPalm" id="Q9ULC4"/>
<dbReference type="BioMuta" id="MCTS1"/>
<dbReference type="DMDM" id="74735052"/>
<dbReference type="jPOST" id="Q9ULC4"/>
<dbReference type="MassIVE" id="Q9ULC4"/>
<dbReference type="PaxDb" id="9606-ENSP00000360365"/>
<dbReference type="PeptideAtlas" id="Q9ULC4"/>
<dbReference type="ProteomicsDB" id="84976">
    <molecule id="Q9ULC4-1"/>
</dbReference>
<dbReference type="ProteomicsDB" id="84977">
    <molecule id="Q9ULC4-2"/>
</dbReference>
<dbReference type="ProteomicsDB" id="84978">
    <molecule id="Q9ULC4-3"/>
</dbReference>
<dbReference type="Pumba" id="Q9ULC4"/>
<dbReference type="Antibodypedia" id="29908">
    <property type="antibodies" value="279 antibodies from 28 providers"/>
</dbReference>
<dbReference type="DNASU" id="28985"/>
<dbReference type="Ensembl" id="ENST00000371315.3">
    <molecule id="Q9ULC4-3"/>
    <property type="protein sequence ID" value="ENSP00000360365.3"/>
    <property type="gene ID" value="ENSG00000232119.8"/>
</dbReference>
<dbReference type="Ensembl" id="ENST00000371317.10">
    <molecule id="Q9ULC4-1"/>
    <property type="protein sequence ID" value="ENSP00000360367.5"/>
    <property type="gene ID" value="ENSG00000232119.8"/>
</dbReference>
<dbReference type="GeneID" id="28985"/>
<dbReference type="KEGG" id="hsa:28985"/>
<dbReference type="MANE-Select" id="ENST00000371317.10">
    <property type="protein sequence ID" value="ENSP00000360367.5"/>
    <property type="RefSeq nucleotide sequence ID" value="NM_014060.3"/>
    <property type="RefSeq protein sequence ID" value="NP_054779.1"/>
</dbReference>
<dbReference type="UCSC" id="uc004esx.4">
    <molecule id="Q9ULC4-1"/>
    <property type="organism name" value="human"/>
</dbReference>
<dbReference type="AGR" id="HGNC:23357"/>
<dbReference type="CTD" id="28985"/>
<dbReference type="DisGeNET" id="28985"/>
<dbReference type="GeneCards" id="MCTS1"/>
<dbReference type="HGNC" id="HGNC:23357">
    <property type="gene designation" value="MCTS1"/>
</dbReference>
<dbReference type="HPA" id="ENSG00000232119">
    <property type="expression patterns" value="Low tissue specificity"/>
</dbReference>
<dbReference type="MalaCards" id="MCTS1"/>
<dbReference type="MIM" id="300587">
    <property type="type" value="gene"/>
</dbReference>
<dbReference type="MIM" id="301115">
    <property type="type" value="phenotype"/>
</dbReference>
<dbReference type="neXtProt" id="NX_Q9ULC4"/>
<dbReference type="OpenTargets" id="ENSG00000232119"/>
<dbReference type="PharmGKB" id="PA128394649"/>
<dbReference type="VEuPathDB" id="HostDB:ENSG00000232119"/>
<dbReference type="eggNOG" id="KOG2523">
    <property type="taxonomic scope" value="Eukaryota"/>
</dbReference>
<dbReference type="GeneTree" id="ENSGT00550000074964"/>
<dbReference type="HOGENOM" id="CLU_090468_0_1_1"/>
<dbReference type="InParanoid" id="Q9ULC4"/>
<dbReference type="OMA" id="GVENIHY"/>
<dbReference type="OrthoDB" id="10249667at2759"/>
<dbReference type="PAN-GO" id="Q9ULC4">
    <property type="GO annotations" value="1 GO annotation based on evolutionary models"/>
</dbReference>
<dbReference type="PhylomeDB" id="Q9ULC4"/>
<dbReference type="TreeFam" id="TF315123"/>
<dbReference type="PathwayCommons" id="Q9ULC4"/>
<dbReference type="SignaLink" id="Q9ULC4"/>
<dbReference type="SIGNOR" id="Q9ULC4"/>
<dbReference type="BioGRID-ORCS" id="28985">
    <property type="hits" value="172 hits in 762 CRISPR screens"/>
</dbReference>
<dbReference type="CD-CODE" id="91857CE7">
    <property type="entry name" value="Nucleolus"/>
</dbReference>
<dbReference type="CD-CODE" id="DEE660B4">
    <property type="entry name" value="Stress granule"/>
</dbReference>
<dbReference type="ChiTaRS" id="MCTS1">
    <property type="organism name" value="human"/>
</dbReference>
<dbReference type="EvolutionaryTrace" id="Q9ULC4"/>
<dbReference type="GenomeRNAi" id="28985"/>
<dbReference type="Pharos" id="Q9ULC4">
    <property type="development level" value="Tbio"/>
</dbReference>
<dbReference type="PRO" id="PR:Q9ULC4"/>
<dbReference type="Proteomes" id="UP000005640">
    <property type="component" value="Chromosome X"/>
</dbReference>
<dbReference type="RNAct" id="Q9ULC4">
    <property type="molecule type" value="protein"/>
</dbReference>
<dbReference type="Bgee" id="ENSG00000232119">
    <property type="expression patterns" value="Expressed in cortical plate and 103 other cell types or tissues"/>
</dbReference>
<dbReference type="GO" id="GO:0005737">
    <property type="term" value="C:cytoplasm"/>
    <property type="evidence" value="ECO:0000314"/>
    <property type="project" value="UniProtKB"/>
</dbReference>
<dbReference type="GO" id="GO:0043024">
    <property type="term" value="F:ribosomal small subunit binding"/>
    <property type="evidence" value="ECO:0000314"/>
    <property type="project" value="UniProtKB"/>
</dbReference>
<dbReference type="GO" id="GO:0000339">
    <property type="term" value="F:RNA cap binding"/>
    <property type="evidence" value="ECO:0000314"/>
    <property type="project" value="UniProtKB"/>
</dbReference>
<dbReference type="GO" id="GO:0003743">
    <property type="term" value="F:translation initiation factor activity"/>
    <property type="evidence" value="ECO:0000314"/>
    <property type="project" value="UniProtKB"/>
</dbReference>
<dbReference type="GO" id="GO:0006974">
    <property type="term" value="P:DNA damage response"/>
    <property type="evidence" value="ECO:0007669"/>
    <property type="project" value="UniProtKB-KW"/>
</dbReference>
<dbReference type="GO" id="GO:0001731">
    <property type="term" value="P:formation of translation preinitiation complex"/>
    <property type="evidence" value="ECO:0000314"/>
    <property type="project" value="UniProtKB"/>
</dbReference>
<dbReference type="GO" id="GO:0075522">
    <property type="term" value="P:IRES-dependent viral translational initiation"/>
    <property type="evidence" value="ECO:0000314"/>
    <property type="project" value="UniProtKB"/>
</dbReference>
<dbReference type="GO" id="GO:0032790">
    <property type="term" value="P:ribosome disassembly"/>
    <property type="evidence" value="ECO:0000314"/>
    <property type="project" value="UniProtKB"/>
</dbReference>
<dbReference type="GO" id="GO:0002188">
    <property type="term" value="P:translation reinitiation"/>
    <property type="evidence" value="ECO:0000315"/>
    <property type="project" value="UniProtKB"/>
</dbReference>
<dbReference type="CDD" id="cd11609">
    <property type="entry name" value="MCT1_N"/>
    <property type="match status" value="1"/>
</dbReference>
<dbReference type="CDD" id="cd21155">
    <property type="entry name" value="PUA_MCTS-1-like"/>
    <property type="match status" value="1"/>
</dbReference>
<dbReference type="FunFam" id="3.10.400.20:FF:000001">
    <property type="entry name" value="Malignant T-cell-amplified sequence 1"/>
    <property type="match status" value="1"/>
</dbReference>
<dbReference type="Gene3D" id="3.10.400.20">
    <property type="match status" value="1"/>
</dbReference>
<dbReference type="InterPro" id="IPR016437">
    <property type="entry name" value="MCT-1/Tma20"/>
</dbReference>
<dbReference type="InterPro" id="IPR041366">
    <property type="entry name" value="Pre-PUA"/>
</dbReference>
<dbReference type="InterPro" id="IPR002478">
    <property type="entry name" value="PUA"/>
</dbReference>
<dbReference type="InterPro" id="IPR015947">
    <property type="entry name" value="PUA-like_sf"/>
</dbReference>
<dbReference type="InterPro" id="IPR004521">
    <property type="entry name" value="Uncharacterised_CHP00451"/>
</dbReference>
<dbReference type="NCBIfam" id="TIGR00451">
    <property type="entry name" value="unchar_dom_2"/>
    <property type="match status" value="1"/>
</dbReference>
<dbReference type="PANTHER" id="PTHR22798:SF0">
    <property type="entry name" value="MALIGNANT T-CELL-AMPLIFIED SEQUENCE 1"/>
    <property type="match status" value="1"/>
</dbReference>
<dbReference type="PANTHER" id="PTHR22798">
    <property type="entry name" value="MCT-1 PROTEIN"/>
    <property type="match status" value="1"/>
</dbReference>
<dbReference type="Pfam" id="PF17832">
    <property type="entry name" value="Pre-PUA"/>
    <property type="match status" value="1"/>
</dbReference>
<dbReference type="Pfam" id="PF01472">
    <property type="entry name" value="PUA"/>
    <property type="match status" value="1"/>
</dbReference>
<dbReference type="PIRSF" id="PIRSF005067">
    <property type="entry name" value="Tma_RNA-bind_prd"/>
    <property type="match status" value="1"/>
</dbReference>
<dbReference type="SMART" id="SM00359">
    <property type="entry name" value="PUA"/>
    <property type="match status" value="1"/>
</dbReference>
<dbReference type="SUPFAM" id="SSF88697">
    <property type="entry name" value="PUA domain-like"/>
    <property type="match status" value="1"/>
</dbReference>
<dbReference type="PROSITE" id="PS50890">
    <property type="entry name" value="PUA"/>
    <property type="match status" value="1"/>
</dbReference>
<feature type="chain" id="PRO_0000344786" description="Malignant T-cell-amplified sequence 1">
    <location>
        <begin position="1"/>
        <end position="181"/>
    </location>
</feature>
<feature type="domain" description="PUA" evidence="1">
    <location>
        <begin position="92"/>
        <end position="171"/>
    </location>
</feature>
<feature type="modified residue" description="Phosphothreonine; by MAPK1 and MAPK3" evidence="8">
    <location>
        <position position="81"/>
    </location>
</feature>
<feature type="modified residue" description="Phosphoserine; by CDK1" evidence="8">
    <location>
        <position position="118"/>
    </location>
</feature>
<feature type="splice variant" id="VSP_034856" description="In isoform 2." evidence="14">
    <original>MFKKFDEKENVSNCIQLKTSVI</original>
    <variation>MENYSFLDKE</variation>
    <location>
        <begin position="1"/>
        <end position="22"/>
    </location>
</feature>
<feature type="splice variant" id="VSP_041352" description="In isoform 3." evidence="13">
    <original>MFKK</original>
    <variation>MGKGR</variation>
    <location>
        <begin position="1"/>
        <end position="4"/>
    </location>
</feature>
<feature type="sequence variant" id="VAR_045632" description="In dbSNP:rs2233110.">
    <original>L</original>
    <variation>H</variation>
    <location>
        <position position="106"/>
    </location>
</feature>
<feature type="mutagenesis site" description="No phosphorylation by MAPK1; decreased stability of MCTS1 protein; Significant cell growth reduction." evidence="8">
    <original>T</original>
    <variation>A</variation>
    <location>
        <position position="81"/>
    </location>
</feature>
<feature type="mutagenesis site" description="No phosphorylation by CDK1; No cell growth alteration." evidence="8">
    <original>S</original>
    <variation>A</variation>
    <location>
        <position position="118"/>
    </location>
</feature>
<feature type="sequence conflict" description="In Ref. 6; AAH95461." evidence="15" ref="6">
    <original>I</original>
    <variation>L</variation>
    <location>
        <position position="25"/>
    </location>
</feature>
<feature type="strand" evidence="17">
    <location>
        <begin position="3"/>
        <end position="5"/>
    </location>
</feature>
<feature type="helix" evidence="16">
    <location>
        <begin position="7"/>
        <end position="10"/>
    </location>
</feature>
<feature type="strand" evidence="16">
    <location>
        <begin position="11"/>
        <end position="16"/>
    </location>
</feature>
<feature type="helix" evidence="16">
    <location>
        <begin position="19"/>
        <end position="32"/>
    </location>
</feature>
<feature type="helix" evidence="16">
    <location>
        <begin position="34"/>
        <end position="39"/>
    </location>
</feature>
<feature type="helix" evidence="16">
    <location>
        <begin position="40"/>
        <end position="43"/>
    </location>
</feature>
<feature type="strand" evidence="16">
    <location>
        <begin position="50"/>
        <end position="55"/>
    </location>
</feature>
<feature type="helix" evidence="16">
    <location>
        <begin position="56"/>
        <end position="58"/>
    </location>
</feature>
<feature type="strand" evidence="16">
    <location>
        <begin position="59"/>
        <end position="64"/>
    </location>
</feature>
<feature type="strand" evidence="16">
    <location>
        <begin position="67"/>
        <end position="73"/>
    </location>
</feature>
<feature type="helix" evidence="16">
    <location>
        <begin position="82"/>
        <end position="87"/>
    </location>
</feature>
<feature type="helix" evidence="16">
    <location>
        <begin position="89"/>
        <end position="91"/>
    </location>
</feature>
<feature type="strand" evidence="16">
    <location>
        <begin position="94"/>
        <end position="97"/>
    </location>
</feature>
<feature type="helix" evidence="16">
    <location>
        <begin position="99"/>
        <end position="101"/>
    </location>
</feature>
<feature type="helix" evidence="16">
    <location>
        <begin position="102"/>
        <end position="105"/>
    </location>
</feature>
<feature type="turn" evidence="16">
    <location>
        <begin position="106"/>
        <end position="108"/>
    </location>
</feature>
<feature type="helix" evidence="16">
    <location>
        <begin position="114"/>
        <end position="117"/>
    </location>
</feature>
<feature type="strand" evidence="16">
    <location>
        <begin position="131"/>
        <end position="136"/>
    </location>
</feature>
<feature type="strand" evidence="16">
    <location>
        <begin position="143"/>
        <end position="150"/>
    </location>
</feature>
<feature type="helix" evidence="16">
    <location>
        <begin position="152"/>
        <end position="158"/>
    </location>
</feature>
<feature type="strand" evidence="16">
    <location>
        <begin position="161"/>
        <end position="169"/>
    </location>
</feature>
<feature type="helix" evidence="16">
    <location>
        <begin position="173"/>
        <end position="177"/>
    </location>
</feature>
<feature type="strand" evidence="16">
    <location>
        <begin position="179"/>
        <end position="181"/>
    </location>
</feature>
<comment type="function">
    <text evidence="2 3 4 5 6 7 8 9 10 11 12">Translation regulator forming a complex with DENR to promote translation reinitiation. Translation reinitiation is the process where the small ribosomal subunit remains attached to the mRNA following termination of translation of a regulatory upstream ORF (uORF), and resume scanning on the same mRNA molecule to initiate translation of a downstream ORF, usually the main ORF (mORF). The MCTS1/DENR complex is pivotal to two linked mechanisms essential for translation reinitiation. Firstly, the dissociation of deacylated tRNAs from post-termination 40S ribosomal complexes during ribosome recycling. Secondly, the recruitment in an EIF2-independent manner of aminoacylated initiator tRNA to P site of 40S ribosomes for a new round of translation (PubMed:16982740, PubMed:20713520, PubMed:37875108). This regulatory mechanism governs the translation of more than 150 genes which translation reinitiation is MCTS1/DENR complex-dependent (PubMed:16982740, PubMed:20713520, PubMed:37875108). Consequently, modulates various unrelated biological processes including cell cycle regulation and DNA damage signaling and repair (PubMed:10440924, PubMed:11709712, PubMed:12637315, PubMed:15897892, PubMed:16322206, PubMed:17016429, PubMed:17416211, PubMed:9766643). Notably, it positively regulates interferon gamma immunity to mycobacteria by enhancing the translation of JAK2 (PubMed:37875108).</text>
</comment>
<comment type="subunit">
    <text evidence="7 11">Interacts (via PUA domain) with DENR; the complex regulates translation reinitiation.</text>
</comment>
<comment type="interaction">
    <interactant intactId="EBI-716076">
        <id>Q9ULC4</id>
    </interactant>
    <interactant intactId="EBI-716083">
        <id>O43583</id>
        <label>DENR</label>
    </interactant>
    <organismsDiffer>false</organismsDiffer>
    <experiments>10</experiments>
</comment>
<comment type="subcellular location">
    <subcellularLocation>
        <location evidence="3 7">Cytoplasm</location>
    </subcellularLocation>
    <text>Nuclear relocalization after DNA damage.</text>
</comment>
<comment type="alternative products">
    <event type="alternative splicing"/>
    <isoform>
        <id>Q9ULC4-1</id>
        <name>1</name>
        <sequence type="displayed"/>
    </isoform>
    <isoform>
        <id>Q9ULC4-2</id>
        <name>2</name>
        <sequence type="described" ref="VSP_034856"/>
    </isoform>
    <isoform>
        <id>Q9ULC4-3</id>
        <name>3</name>
        <sequence type="described" ref="VSP_041352"/>
    </isoform>
</comment>
<comment type="tissue specificity">
    <text evidence="12">Ubiquitous. Over-expressed in T-cell lymphoid cell lines and in non-Hodgkin lymphoma cell lines as well as in a subset of primary large B-cell lymphomas.</text>
</comment>
<comment type="induction">
    <text evidence="3">By DNA damaging agents such as gamma irradiation, adriamycin or taxol in lymphoid cells, but not by stress stimuli such as heat shock. This induction of protein expression does not occur at the RNA level, and does not require new protein synthesis.</text>
</comment>
<comment type="domain">
    <text evidence="7">The PUA RNA-binding domain is critical for cap binding, but not sufficient for translation enhancer function. MCT1 N-terminal region is required to enhance translation possibly through interaction with other proteins.</text>
</comment>
<comment type="PTM">
    <text evidence="8">Phosphorylation is critical for stabilization and promotion of cell proliferation.</text>
</comment>
<comment type="disease" evidence="11">
    <disease id="DI-06818">
        <name>Immunodeficiency 118</name>
        <acronym>IMD118</acronym>
        <description>An X-linked recessive disorder characterized by increased susceptibility to disseminated mycobacterial infections in infancy, notably after Bacillus Calmette-Guerin (BCG) vaccination. Initial clinical features include fever, lymphadenopathy, hepatosplenomegaly, abscesses, and osteomyelitis. Affected males usually recover with treatment, have no other infections, and show normal growth and development.</description>
        <dbReference type="MIM" id="301115"/>
    </disease>
    <text>The disease is caused by variants affecting the gene represented in this entry.</text>
</comment>
<comment type="similarity">
    <text evidence="15">Belongs to the MCTS1 family.</text>
</comment>